<proteinExistence type="uncertain"/>
<organism>
    <name type="scientific">Dioscorea elephantipes</name>
    <name type="common">Elephant's foot yam</name>
    <name type="synonym">Testudinaria elephantipes</name>
    <dbReference type="NCBI Taxonomy" id="145284"/>
    <lineage>
        <taxon>Eukaryota</taxon>
        <taxon>Viridiplantae</taxon>
        <taxon>Streptophyta</taxon>
        <taxon>Embryophyta</taxon>
        <taxon>Tracheophyta</taxon>
        <taxon>Spermatophyta</taxon>
        <taxon>Magnoliopsida</taxon>
        <taxon>Liliopsida</taxon>
        <taxon>Dioscoreales</taxon>
        <taxon>Dioscoreaceae</taxon>
        <taxon>Dioscorea</taxon>
    </lineage>
</organism>
<name>YCF15_DIOEL</name>
<dbReference type="EMBL" id="EF380353">
    <property type="protein sequence ID" value="ABR01474.1"/>
    <property type="molecule type" value="Genomic_DNA"/>
</dbReference>
<dbReference type="EMBL" id="EF380353">
    <property type="protein sequence ID" value="ABR01491.1"/>
    <property type="molecule type" value="Genomic_DNA"/>
</dbReference>
<dbReference type="GO" id="GO:0009507">
    <property type="term" value="C:chloroplast"/>
    <property type="evidence" value="ECO:0007669"/>
    <property type="project" value="UniProtKB-SubCell"/>
</dbReference>
<dbReference type="InterPro" id="IPR019645">
    <property type="entry name" value="Uncharacterised_Ycf15"/>
</dbReference>
<dbReference type="Pfam" id="PF10705">
    <property type="entry name" value="Ycf15"/>
    <property type="match status" value="1"/>
</dbReference>
<feature type="chain" id="PRO_0000360382" description="Putative uncharacterized protein ycf15">
    <location>
        <begin position="1"/>
        <end position="19"/>
    </location>
</feature>
<sequence>MLLLKHGRIEILDQNTMYG</sequence>
<gene>
    <name type="primary">ycf15-A</name>
</gene>
<gene>
    <name type="primary">ycf15-B</name>
</gene>
<comment type="subcellular location">
    <subcellularLocation>
        <location>Plastid</location>
        <location>Chloroplast</location>
    </subcellularLocation>
</comment>
<comment type="similarity">
    <text evidence="1">Belongs to the ycf15 family.</text>
</comment>
<comment type="caution">
    <text evidence="1">Could be the product of a pseudogene.</text>
</comment>
<accession>A6MMQ2</accession>
<keyword id="KW-0150">Chloroplast</keyword>
<keyword id="KW-0934">Plastid</keyword>
<reference key="1">
    <citation type="journal article" date="2007" name="Mol. Phylogenet. Evol.">
        <title>Phylogenetic and evolutionary implications of complete chloroplast genome sequences of four early-diverging angiosperms: Buxus (Buxaceae), Chloranthus (Chloranthaceae), Dioscorea (Dioscoreaceae), and Illicium (Schisandraceae).</title>
        <authorList>
            <person name="Hansen D.R."/>
            <person name="Dastidar S.G."/>
            <person name="Cai Z."/>
            <person name="Penaflor C."/>
            <person name="Kuehl J.V."/>
            <person name="Boore J.L."/>
            <person name="Jansen R.K."/>
        </authorList>
    </citation>
    <scope>NUCLEOTIDE SEQUENCE [LARGE SCALE GENOMIC DNA]</scope>
</reference>
<geneLocation type="chloroplast"/>
<evidence type="ECO:0000305" key="1"/>
<protein>
    <recommendedName>
        <fullName>Putative uncharacterized protein ycf15</fullName>
    </recommendedName>
</protein>